<gene>
    <name evidence="1" type="primary">ctaG</name>
    <name type="ordered locus">R00908</name>
    <name type="ORF">SMc00012</name>
</gene>
<keyword id="KW-0002">3D-structure</keyword>
<keyword id="KW-0997">Cell inner membrane</keyword>
<keyword id="KW-1003">Cell membrane</keyword>
<keyword id="KW-0186">Copper</keyword>
<keyword id="KW-0472">Membrane</keyword>
<keyword id="KW-1185">Reference proteome</keyword>
<keyword id="KW-0735">Signal-anchor</keyword>
<keyword id="KW-0812">Transmembrane</keyword>
<keyword id="KW-1133">Transmembrane helix</keyword>
<sequence length="198" mass="21812">MADNGQADRKERSNGVIVGTCLAFVAGMIGMAYAAVPLYDMFCRVTGYNGTTQRVEQASDLILDEKIKVTFDANVAAGLPWEFVPVQRDIDVRIGETVQIMYRAKNLASTPTTGQATFNVTPMAAGAYFNKVQCFCFTETTLEPGEEMEMPVVFFVDPEIVKPVETQGIKTLTLSYTFYPREPSKPVAQVKAKAENKL</sequence>
<comment type="function">
    <text evidence="1">Exerts its effect at some terminal stage of cytochrome c oxidase synthesis, probably by being involved in the insertion of the copper B into subunit I.</text>
</comment>
<comment type="subcellular location">
    <subcellularLocation>
        <location evidence="1">Cell inner membrane</location>
        <topology evidence="1">Single-pass type II membrane protein</topology>
        <orientation evidence="1">Periplasmic side</orientation>
    </subcellularLocation>
</comment>
<comment type="similarity">
    <text evidence="1">Belongs to the COX11/CtaG family.</text>
</comment>
<proteinExistence type="evidence at protein level"/>
<name>COXZ_RHIME</name>
<dbReference type="EMBL" id="AL591688">
    <property type="protein sequence ID" value="CAC45480.1"/>
    <property type="molecule type" value="Genomic_DNA"/>
</dbReference>
<dbReference type="RefSeq" id="NP_385014.1">
    <property type="nucleotide sequence ID" value="NC_003047.1"/>
</dbReference>
<dbReference type="RefSeq" id="WP_010968908.1">
    <property type="nucleotide sequence ID" value="NC_003047.1"/>
</dbReference>
<dbReference type="PDB" id="1SO9">
    <property type="method" value="NMR"/>
    <property type="chains" value="A=36-198"/>
</dbReference>
<dbReference type="PDB" id="1SP0">
    <property type="method" value="NMR"/>
    <property type="chains" value="A=36-198"/>
</dbReference>
<dbReference type="PDBsum" id="1SO9"/>
<dbReference type="PDBsum" id="1SP0"/>
<dbReference type="BMRB" id="Q92RG6"/>
<dbReference type="SMR" id="Q92RG6"/>
<dbReference type="EnsemblBacteria" id="CAC45480">
    <property type="protein sequence ID" value="CAC45480"/>
    <property type="gene ID" value="SMc00012"/>
</dbReference>
<dbReference type="KEGG" id="sme:SMc00012"/>
<dbReference type="PATRIC" id="fig|266834.11.peg.2305"/>
<dbReference type="eggNOG" id="COG3175">
    <property type="taxonomic scope" value="Bacteria"/>
</dbReference>
<dbReference type="HOGENOM" id="CLU_045000_5_0_5"/>
<dbReference type="OrthoDB" id="9804841at2"/>
<dbReference type="EvolutionaryTrace" id="Q92RG6"/>
<dbReference type="Proteomes" id="UP000001976">
    <property type="component" value="Chromosome"/>
</dbReference>
<dbReference type="GO" id="GO:0005886">
    <property type="term" value="C:plasma membrane"/>
    <property type="evidence" value="ECO:0007669"/>
    <property type="project" value="UniProtKB-SubCell"/>
</dbReference>
<dbReference type="GO" id="GO:0005507">
    <property type="term" value="F:copper ion binding"/>
    <property type="evidence" value="ECO:0007669"/>
    <property type="project" value="InterPro"/>
</dbReference>
<dbReference type="GO" id="GO:0008535">
    <property type="term" value="P:respiratory chain complex IV assembly"/>
    <property type="evidence" value="ECO:0007669"/>
    <property type="project" value="UniProtKB-UniRule"/>
</dbReference>
<dbReference type="FunFam" id="2.60.370.10:FF:000001">
    <property type="entry name" value="COX11 cytochrome c oxidase assembly homolog"/>
    <property type="match status" value="1"/>
</dbReference>
<dbReference type="Gene3D" id="2.60.370.10">
    <property type="entry name" value="Ctag/Cox11"/>
    <property type="match status" value="1"/>
</dbReference>
<dbReference type="HAMAP" id="MF_00155">
    <property type="entry name" value="CtaG"/>
    <property type="match status" value="1"/>
</dbReference>
<dbReference type="InterPro" id="IPR023471">
    <property type="entry name" value="CtaG/Cox11_dom_sf"/>
</dbReference>
<dbReference type="InterPro" id="IPR007533">
    <property type="entry name" value="Cyt_c_oxidase_assmbl_CtaG"/>
</dbReference>
<dbReference type="NCBIfam" id="NF003465">
    <property type="entry name" value="PRK05089.1"/>
    <property type="match status" value="1"/>
</dbReference>
<dbReference type="PANTHER" id="PTHR21320:SF3">
    <property type="entry name" value="CYTOCHROME C OXIDASE ASSEMBLY PROTEIN COX11, MITOCHONDRIAL-RELATED"/>
    <property type="match status" value="1"/>
</dbReference>
<dbReference type="PANTHER" id="PTHR21320">
    <property type="entry name" value="CYTOCHROME C OXIDASE ASSEMBLY PROTEIN COX11-RELATED"/>
    <property type="match status" value="1"/>
</dbReference>
<dbReference type="Pfam" id="PF04442">
    <property type="entry name" value="CtaG_Cox11"/>
    <property type="match status" value="1"/>
</dbReference>
<dbReference type="PIRSF" id="PIRSF005413">
    <property type="entry name" value="COX11"/>
    <property type="match status" value="1"/>
</dbReference>
<dbReference type="SUPFAM" id="SSF110111">
    <property type="entry name" value="Ctag/Cox11"/>
    <property type="match status" value="1"/>
</dbReference>
<feature type="chain" id="PRO_0000206039" description="Cytochrome c oxidase assembly protein CtaG">
    <location>
        <begin position="1"/>
        <end position="198"/>
    </location>
</feature>
<feature type="topological domain" description="Cytoplasmic" evidence="1">
    <location>
        <begin position="1"/>
        <end position="12"/>
    </location>
</feature>
<feature type="transmembrane region" description="Helical; Signal-anchor for type II membrane protein" evidence="1">
    <location>
        <begin position="13"/>
        <end position="35"/>
    </location>
</feature>
<feature type="topological domain" description="Periplasmic" evidence="1">
    <location>
        <begin position="36"/>
        <end position="198"/>
    </location>
</feature>
<feature type="strand" evidence="2">
    <location>
        <begin position="59"/>
        <end position="61"/>
    </location>
</feature>
<feature type="strand" evidence="2">
    <location>
        <begin position="67"/>
        <end position="75"/>
    </location>
</feature>
<feature type="strand" evidence="2">
    <location>
        <begin position="81"/>
        <end position="84"/>
    </location>
</feature>
<feature type="strand" evidence="2">
    <location>
        <begin position="88"/>
        <end position="92"/>
    </location>
</feature>
<feature type="strand" evidence="2">
    <location>
        <begin position="100"/>
        <end position="106"/>
    </location>
</feature>
<feature type="strand" evidence="2">
    <location>
        <begin position="108"/>
        <end position="110"/>
    </location>
</feature>
<feature type="strand" evidence="2">
    <location>
        <begin position="117"/>
        <end position="120"/>
    </location>
</feature>
<feature type="strand" evidence="2">
    <location>
        <begin position="122"/>
        <end position="124"/>
    </location>
</feature>
<feature type="strand" evidence="3">
    <location>
        <begin position="129"/>
        <end position="131"/>
    </location>
</feature>
<feature type="strand" evidence="2">
    <location>
        <begin position="147"/>
        <end position="152"/>
    </location>
</feature>
<feature type="helix" evidence="2">
    <location>
        <begin position="158"/>
        <end position="161"/>
    </location>
</feature>
<feature type="turn" evidence="2">
    <location>
        <begin position="164"/>
        <end position="168"/>
    </location>
</feature>
<feature type="strand" evidence="2">
    <location>
        <begin position="174"/>
        <end position="178"/>
    </location>
</feature>
<protein>
    <recommendedName>
        <fullName evidence="1">Cytochrome c oxidase assembly protein CtaG</fullName>
    </recommendedName>
</protein>
<accession>Q92RG6</accession>
<organism>
    <name type="scientific">Rhizobium meliloti (strain 1021)</name>
    <name type="common">Ensifer meliloti</name>
    <name type="synonym">Sinorhizobium meliloti</name>
    <dbReference type="NCBI Taxonomy" id="266834"/>
    <lineage>
        <taxon>Bacteria</taxon>
        <taxon>Pseudomonadati</taxon>
        <taxon>Pseudomonadota</taxon>
        <taxon>Alphaproteobacteria</taxon>
        <taxon>Hyphomicrobiales</taxon>
        <taxon>Rhizobiaceae</taxon>
        <taxon>Sinorhizobium/Ensifer group</taxon>
        <taxon>Sinorhizobium</taxon>
    </lineage>
</organism>
<reference key="1">
    <citation type="journal article" date="2001" name="Proc. Natl. Acad. Sci. U.S.A.">
        <title>Analysis of the chromosome sequence of the legume symbiont Sinorhizobium meliloti strain 1021.</title>
        <authorList>
            <person name="Capela D."/>
            <person name="Barloy-Hubler F."/>
            <person name="Gouzy J."/>
            <person name="Bothe G."/>
            <person name="Ampe F."/>
            <person name="Batut J."/>
            <person name="Boistard P."/>
            <person name="Becker A."/>
            <person name="Boutry M."/>
            <person name="Cadieu E."/>
            <person name="Dreano S."/>
            <person name="Gloux S."/>
            <person name="Godrie T."/>
            <person name="Goffeau A."/>
            <person name="Kahn D."/>
            <person name="Kiss E."/>
            <person name="Lelaure V."/>
            <person name="Masuy D."/>
            <person name="Pohl T."/>
            <person name="Portetelle D."/>
            <person name="Puehler A."/>
            <person name="Purnelle B."/>
            <person name="Ramsperger U."/>
            <person name="Renard C."/>
            <person name="Thebault P."/>
            <person name="Vandenbol M."/>
            <person name="Weidner S."/>
            <person name="Galibert F."/>
        </authorList>
    </citation>
    <scope>NUCLEOTIDE SEQUENCE [LARGE SCALE GENOMIC DNA]</scope>
    <source>
        <strain>1021</strain>
    </source>
</reference>
<reference key="2">
    <citation type="journal article" date="2001" name="Science">
        <title>The composite genome of the legume symbiont Sinorhizobium meliloti.</title>
        <authorList>
            <person name="Galibert F."/>
            <person name="Finan T.M."/>
            <person name="Long S.R."/>
            <person name="Puehler A."/>
            <person name="Abola P."/>
            <person name="Ampe F."/>
            <person name="Barloy-Hubler F."/>
            <person name="Barnett M.J."/>
            <person name="Becker A."/>
            <person name="Boistard P."/>
            <person name="Bothe G."/>
            <person name="Boutry M."/>
            <person name="Bowser L."/>
            <person name="Buhrmester J."/>
            <person name="Cadieu E."/>
            <person name="Capela D."/>
            <person name="Chain P."/>
            <person name="Cowie A."/>
            <person name="Davis R.W."/>
            <person name="Dreano S."/>
            <person name="Federspiel N.A."/>
            <person name="Fisher R.F."/>
            <person name="Gloux S."/>
            <person name="Godrie T."/>
            <person name="Goffeau A."/>
            <person name="Golding B."/>
            <person name="Gouzy J."/>
            <person name="Gurjal M."/>
            <person name="Hernandez-Lucas I."/>
            <person name="Hong A."/>
            <person name="Huizar L."/>
            <person name="Hyman R.W."/>
            <person name="Jones T."/>
            <person name="Kahn D."/>
            <person name="Kahn M.L."/>
            <person name="Kalman S."/>
            <person name="Keating D.H."/>
            <person name="Kiss E."/>
            <person name="Komp C."/>
            <person name="Lelaure V."/>
            <person name="Masuy D."/>
            <person name="Palm C."/>
            <person name="Peck M.C."/>
            <person name="Pohl T.M."/>
            <person name="Portetelle D."/>
            <person name="Purnelle B."/>
            <person name="Ramsperger U."/>
            <person name="Surzycki R."/>
            <person name="Thebault P."/>
            <person name="Vandenbol M."/>
            <person name="Vorhoelter F.J."/>
            <person name="Weidner S."/>
            <person name="Wells D.H."/>
            <person name="Wong K."/>
            <person name="Yeh K.-C."/>
            <person name="Batut J."/>
        </authorList>
    </citation>
    <scope>NUCLEOTIDE SEQUENCE [LARGE SCALE GENOMIC DNA]</scope>
    <source>
        <strain>1021</strain>
    </source>
</reference>
<evidence type="ECO:0000255" key="1">
    <source>
        <dbReference type="HAMAP-Rule" id="MF_00155"/>
    </source>
</evidence>
<evidence type="ECO:0007829" key="2">
    <source>
        <dbReference type="PDB" id="1SO9"/>
    </source>
</evidence>
<evidence type="ECO:0007829" key="3">
    <source>
        <dbReference type="PDB" id="1SP0"/>
    </source>
</evidence>